<sequence length="373" mass="38510">MSLQSSIRADSNCTLPNNPVCVLLPVDFIVAAMASSTSSAMAKWAAQAARGFAAAAPSSGKGRKVAVLGAAGGIGQPLSMLMKMNSQVSSLSLYDIAGTPGVAADVSHINTKAQVKGFDKDGLAEALRGCDLVIIPAGVPRKPGMTRDDLFKINAGIVRDLVTAVGQHCPGAVLNIISNPVNSTVPIAAEQLKKMGVYDKRKVMGVTTLDVVRAKTFYAEKNGLDVASVDVPVVGGHAGVTILPLFSQATPKATMSAEVLDALTKRTQDGGTEVVQAKAGKGSATLSMAYAAALFADSCLRGLNGAPVVECTYVESTVTDAPYFASKVKLSTEGVDKIHDLGPLSDYEKAGLKAMMPELLASIEKGVQFVKGA</sequence>
<feature type="transit peptide" description="Mitochondrion" evidence="2">
    <location>
        <begin position="1"/>
        <end status="unknown"/>
    </location>
</feature>
<feature type="chain" id="PRO_0000018624" description="Malate dehydrogenase, mitochondrial">
    <location>
        <begin status="unknown"/>
        <end position="373"/>
    </location>
</feature>
<feature type="active site" description="Proton acceptor" evidence="1">
    <location>
        <position position="237"/>
    </location>
</feature>
<feature type="binding site" evidence="1">
    <location>
        <begin position="69"/>
        <end position="75"/>
    </location>
    <ligand>
        <name>NAD(+)</name>
        <dbReference type="ChEBI" id="CHEBI:57540"/>
    </ligand>
</feature>
<feature type="binding site" evidence="1">
    <location>
        <position position="95"/>
    </location>
    <ligand>
        <name>NAD(+)</name>
        <dbReference type="ChEBI" id="CHEBI:57540"/>
    </ligand>
</feature>
<feature type="binding site" evidence="3">
    <location>
        <position position="141"/>
    </location>
    <ligand>
        <name>substrate</name>
    </ligand>
</feature>
<feature type="binding site" evidence="3">
    <location>
        <position position="147"/>
    </location>
    <ligand>
        <name>substrate</name>
    </ligand>
</feature>
<feature type="binding site" evidence="1">
    <location>
        <position position="154"/>
    </location>
    <ligand>
        <name>NAD(+)</name>
        <dbReference type="ChEBI" id="CHEBI:57540"/>
    </ligand>
</feature>
<feature type="binding site" evidence="1">
    <location>
        <begin position="177"/>
        <end position="179"/>
    </location>
    <ligand>
        <name>NAD(+)</name>
        <dbReference type="ChEBI" id="CHEBI:57540"/>
    </ligand>
</feature>
<feature type="binding site" evidence="3">
    <location>
        <position position="179"/>
    </location>
    <ligand>
        <name>substrate</name>
    </ligand>
</feature>
<feature type="binding site" evidence="3">
    <location>
        <position position="213"/>
    </location>
    <ligand>
        <name>substrate</name>
    </ligand>
</feature>
<feature type="binding site" evidence="1">
    <location>
        <position position="288"/>
    </location>
    <ligand>
        <name>NAD(+)</name>
        <dbReference type="ChEBI" id="CHEBI:57540"/>
    </ligand>
</feature>
<keyword id="KW-0496">Mitochondrion</keyword>
<keyword id="KW-0520">NAD</keyword>
<keyword id="KW-0560">Oxidoreductase</keyword>
<keyword id="KW-0809">Transit peptide</keyword>
<keyword id="KW-0816">Tricarboxylic acid cycle</keyword>
<protein>
    <recommendedName>
        <fullName>Malate dehydrogenase, mitochondrial</fullName>
        <ecNumber>1.1.1.37</ecNumber>
    </recommendedName>
</protein>
<accession>Q42686</accession>
<reference key="1">
    <citation type="submission" date="1996-01" db="EMBL/GenBank/DDBJ databases">
        <authorList>
            <person name="Krishnasamy S."/>
            <person name="Chang T.E."/>
            <person name="Makaroff C.A."/>
            <person name="Wang W.Y."/>
        </authorList>
    </citation>
    <scope>NUCLEOTIDE SEQUENCE [GENOMIC DNA]</scope>
</reference>
<comment type="catalytic activity">
    <reaction evidence="3">
        <text>(S)-malate + NAD(+) = oxaloacetate + NADH + H(+)</text>
        <dbReference type="Rhea" id="RHEA:21432"/>
        <dbReference type="ChEBI" id="CHEBI:15378"/>
        <dbReference type="ChEBI" id="CHEBI:15589"/>
        <dbReference type="ChEBI" id="CHEBI:16452"/>
        <dbReference type="ChEBI" id="CHEBI:57540"/>
        <dbReference type="ChEBI" id="CHEBI:57945"/>
        <dbReference type="EC" id="1.1.1.37"/>
    </reaction>
</comment>
<comment type="subunit">
    <text evidence="1">Homodimer.</text>
</comment>
<comment type="subcellular location">
    <subcellularLocation>
        <location>Mitochondrion matrix</location>
    </subcellularLocation>
</comment>
<comment type="similarity">
    <text evidence="4">Belongs to the LDH/MDH superfamily. MDH type 1 family.</text>
</comment>
<organism>
    <name type="scientific">Chlamydomonas reinhardtii</name>
    <name type="common">Chlamydomonas smithii</name>
    <dbReference type="NCBI Taxonomy" id="3055"/>
    <lineage>
        <taxon>Eukaryota</taxon>
        <taxon>Viridiplantae</taxon>
        <taxon>Chlorophyta</taxon>
        <taxon>core chlorophytes</taxon>
        <taxon>Chlorophyceae</taxon>
        <taxon>CS clade</taxon>
        <taxon>Chlamydomonadales</taxon>
        <taxon>Chlamydomonadaceae</taxon>
        <taxon>Chlamydomonas</taxon>
    </lineage>
</organism>
<dbReference type="EC" id="1.1.1.37"/>
<dbReference type="EMBL" id="U40212">
    <property type="protein sequence ID" value="AAA84971.1"/>
    <property type="molecule type" value="Genomic_DNA"/>
</dbReference>
<dbReference type="PIR" id="T08077">
    <property type="entry name" value="T08077"/>
</dbReference>
<dbReference type="RefSeq" id="XP_001703167.1">
    <property type="nucleotide sequence ID" value="XM_001703115.1"/>
</dbReference>
<dbReference type="SMR" id="Q42686"/>
<dbReference type="PaxDb" id="3055-EDO96543"/>
<dbReference type="ProMEX" id="Q42686"/>
<dbReference type="GeneID" id="5728707"/>
<dbReference type="KEGG" id="cre:CHLRE_12g483950v5"/>
<dbReference type="eggNOG" id="KOG1494">
    <property type="taxonomic scope" value="Eukaryota"/>
</dbReference>
<dbReference type="HOGENOM" id="CLU_047181_0_2_1"/>
<dbReference type="OrthoDB" id="4069699at2759"/>
<dbReference type="GO" id="GO:0005759">
    <property type="term" value="C:mitochondrial matrix"/>
    <property type="evidence" value="ECO:0007669"/>
    <property type="project" value="UniProtKB-SubCell"/>
</dbReference>
<dbReference type="GO" id="GO:0030060">
    <property type="term" value="F:L-malate dehydrogenase (NAD+) activity"/>
    <property type="evidence" value="ECO:0007669"/>
    <property type="project" value="UniProtKB-EC"/>
</dbReference>
<dbReference type="GO" id="GO:0006108">
    <property type="term" value="P:malate metabolic process"/>
    <property type="evidence" value="ECO:0007669"/>
    <property type="project" value="InterPro"/>
</dbReference>
<dbReference type="GO" id="GO:0006099">
    <property type="term" value="P:tricarboxylic acid cycle"/>
    <property type="evidence" value="ECO:0007669"/>
    <property type="project" value="UniProtKB-KW"/>
</dbReference>
<dbReference type="CDD" id="cd01337">
    <property type="entry name" value="MDH_glyoxysomal_mitochondrial"/>
    <property type="match status" value="1"/>
</dbReference>
<dbReference type="FunFam" id="3.40.50.720:FF:000013">
    <property type="entry name" value="Malate dehydrogenase"/>
    <property type="match status" value="1"/>
</dbReference>
<dbReference type="FunFam" id="3.90.110.10:FF:000001">
    <property type="entry name" value="Malate dehydrogenase"/>
    <property type="match status" value="1"/>
</dbReference>
<dbReference type="Gene3D" id="3.90.110.10">
    <property type="entry name" value="Lactate dehydrogenase/glycoside hydrolase, family 4, C-terminal"/>
    <property type="match status" value="1"/>
</dbReference>
<dbReference type="Gene3D" id="3.40.50.720">
    <property type="entry name" value="NAD(P)-binding Rossmann-like Domain"/>
    <property type="match status" value="1"/>
</dbReference>
<dbReference type="InterPro" id="IPR022383">
    <property type="entry name" value="Lactate/malate_DH_C"/>
</dbReference>
<dbReference type="InterPro" id="IPR001236">
    <property type="entry name" value="Lactate/malate_DH_N"/>
</dbReference>
<dbReference type="InterPro" id="IPR015955">
    <property type="entry name" value="Lactate_DH/Glyco_Ohase_4_C"/>
</dbReference>
<dbReference type="InterPro" id="IPR001252">
    <property type="entry name" value="Malate_DH_AS"/>
</dbReference>
<dbReference type="InterPro" id="IPR010097">
    <property type="entry name" value="Malate_DH_type1"/>
</dbReference>
<dbReference type="InterPro" id="IPR036291">
    <property type="entry name" value="NAD(P)-bd_dom_sf"/>
</dbReference>
<dbReference type="NCBIfam" id="TIGR01772">
    <property type="entry name" value="MDH_euk_gproteo"/>
    <property type="match status" value="1"/>
</dbReference>
<dbReference type="PANTHER" id="PTHR11540">
    <property type="entry name" value="MALATE AND LACTATE DEHYDROGENASE"/>
    <property type="match status" value="1"/>
</dbReference>
<dbReference type="PANTHER" id="PTHR11540:SF47">
    <property type="entry name" value="MALATE DEHYDROGENASE"/>
    <property type="match status" value="1"/>
</dbReference>
<dbReference type="Pfam" id="PF02866">
    <property type="entry name" value="Ldh_1_C"/>
    <property type="match status" value="1"/>
</dbReference>
<dbReference type="Pfam" id="PF00056">
    <property type="entry name" value="Ldh_1_N"/>
    <property type="match status" value="1"/>
</dbReference>
<dbReference type="SUPFAM" id="SSF56327">
    <property type="entry name" value="LDH C-terminal domain-like"/>
    <property type="match status" value="1"/>
</dbReference>
<dbReference type="SUPFAM" id="SSF51735">
    <property type="entry name" value="NAD(P)-binding Rossmann-fold domains"/>
    <property type="match status" value="1"/>
</dbReference>
<dbReference type="PROSITE" id="PS00068">
    <property type="entry name" value="MDH"/>
    <property type="match status" value="1"/>
</dbReference>
<proteinExistence type="inferred from homology"/>
<name>MDHM_CHLRE</name>
<evidence type="ECO:0000250" key="1"/>
<evidence type="ECO:0000255" key="2"/>
<evidence type="ECO:0000255" key="3">
    <source>
        <dbReference type="PROSITE-ProRule" id="PRU10004"/>
    </source>
</evidence>
<evidence type="ECO:0000305" key="4"/>